<protein>
    <recommendedName>
        <fullName evidence="1">UDP-3-O-acylglucosamine N-acyltransferase</fullName>
        <ecNumber evidence="1">2.3.1.191</ecNumber>
    </recommendedName>
</protein>
<dbReference type="EC" id="2.3.1.191" evidence="1"/>
<dbReference type="EMBL" id="CP001389">
    <property type="protein sequence ID" value="ACP25122.1"/>
    <property type="molecule type" value="Genomic_DNA"/>
</dbReference>
<dbReference type="RefSeq" id="WP_012707898.1">
    <property type="nucleotide sequence ID" value="NC_012587.1"/>
</dbReference>
<dbReference type="RefSeq" id="YP_002825875.1">
    <property type="nucleotide sequence ID" value="NC_012587.1"/>
</dbReference>
<dbReference type="SMR" id="C3MBR0"/>
<dbReference type="STRING" id="394.NGR_c13420"/>
<dbReference type="KEGG" id="rhi:NGR_c13420"/>
<dbReference type="PATRIC" id="fig|394.7.peg.4163"/>
<dbReference type="eggNOG" id="COG1044">
    <property type="taxonomic scope" value="Bacteria"/>
</dbReference>
<dbReference type="HOGENOM" id="CLU_049865_0_2_5"/>
<dbReference type="OrthoDB" id="9784739at2"/>
<dbReference type="UniPathway" id="UPA00973"/>
<dbReference type="Proteomes" id="UP000001054">
    <property type="component" value="Chromosome"/>
</dbReference>
<dbReference type="GO" id="GO:0016020">
    <property type="term" value="C:membrane"/>
    <property type="evidence" value="ECO:0007669"/>
    <property type="project" value="GOC"/>
</dbReference>
<dbReference type="GO" id="GO:0016410">
    <property type="term" value="F:N-acyltransferase activity"/>
    <property type="evidence" value="ECO:0007669"/>
    <property type="project" value="InterPro"/>
</dbReference>
<dbReference type="GO" id="GO:0009245">
    <property type="term" value="P:lipid A biosynthetic process"/>
    <property type="evidence" value="ECO:0007669"/>
    <property type="project" value="UniProtKB-UniRule"/>
</dbReference>
<dbReference type="CDD" id="cd03352">
    <property type="entry name" value="LbH_LpxD"/>
    <property type="match status" value="1"/>
</dbReference>
<dbReference type="Gene3D" id="2.160.10.10">
    <property type="entry name" value="Hexapeptide repeat proteins"/>
    <property type="match status" value="1"/>
</dbReference>
<dbReference type="Gene3D" id="3.40.1390.10">
    <property type="entry name" value="MurE/MurF, N-terminal domain"/>
    <property type="match status" value="1"/>
</dbReference>
<dbReference type="HAMAP" id="MF_00523">
    <property type="entry name" value="LpxD"/>
    <property type="match status" value="1"/>
</dbReference>
<dbReference type="InterPro" id="IPR001451">
    <property type="entry name" value="Hexapep"/>
</dbReference>
<dbReference type="InterPro" id="IPR018357">
    <property type="entry name" value="Hexapep_transf_CS"/>
</dbReference>
<dbReference type="InterPro" id="IPR007691">
    <property type="entry name" value="LpxD"/>
</dbReference>
<dbReference type="InterPro" id="IPR011004">
    <property type="entry name" value="Trimer_LpxA-like_sf"/>
</dbReference>
<dbReference type="InterPro" id="IPR020573">
    <property type="entry name" value="UDP_GlcNAc_AcTrfase_non-rep"/>
</dbReference>
<dbReference type="NCBIfam" id="TIGR01853">
    <property type="entry name" value="lipid_A_lpxD"/>
    <property type="match status" value="1"/>
</dbReference>
<dbReference type="NCBIfam" id="NF002060">
    <property type="entry name" value="PRK00892.1"/>
    <property type="match status" value="1"/>
</dbReference>
<dbReference type="PANTHER" id="PTHR43378">
    <property type="entry name" value="UDP-3-O-ACYLGLUCOSAMINE N-ACYLTRANSFERASE"/>
    <property type="match status" value="1"/>
</dbReference>
<dbReference type="PANTHER" id="PTHR43378:SF2">
    <property type="entry name" value="UDP-3-O-ACYLGLUCOSAMINE N-ACYLTRANSFERASE 1, MITOCHONDRIAL-RELATED"/>
    <property type="match status" value="1"/>
</dbReference>
<dbReference type="Pfam" id="PF00132">
    <property type="entry name" value="Hexapep"/>
    <property type="match status" value="3"/>
</dbReference>
<dbReference type="Pfam" id="PF04613">
    <property type="entry name" value="LpxD"/>
    <property type="match status" value="1"/>
</dbReference>
<dbReference type="SUPFAM" id="SSF51161">
    <property type="entry name" value="Trimeric LpxA-like enzymes"/>
    <property type="match status" value="1"/>
</dbReference>
<dbReference type="PROSITE" id="PS00101">
    <property type="entry name" value="HEXAPEP_TRANSFERASES"/>
    <property type="match status" value="1"/>
</dbReference>
<organism>
    <name type="scientific">Sinorhizobium fredii (strain NBRC 101917 / NGR234)</name>
    <dbReference type="NCBI Taxonomy" id="394"/>
    <lineage>
        <taxon>Bacteria</taxon>
        <taxon>Pseudomonadati</taxon>
        <taxon>Pseudomonadota</taxon>
        <taxon>Alphaproteobacteria</taxon>
        <taxon>Hyphomicrobiales</taxon>
        <taxon>Rhizobiaceae</taxon>
        <taxon>Sinorhizobium/Ensifer group</taxon>
        <taxon>Sinorhizobium</taxon>
    </lineage>
</organism>
<keyword id="KW-0012">Acyltransferase</keyword>
<keyword id="KW-0441">Lipid A biosynthesis</keyword>
<keyword id="KW-0444">Lipid biosynthesis</keyword>
<keyword id="KW-0443">Lipid metabolism</keyword>
<keyword id="KW-1185">Reference proteome</keyword>
<keyword id="KW-0677">Repeat</keyword>
<keyword id="KW-0808">Transferase</keyword>
<sequence>MEQNWFFPPHQGIRLGDLADRIGAELSDASVADHPIHGVAPVYRAKAGDVCYMLSRKSRDELESCQASAIICDKAIASIVPSRIPVLLTQKPHTAFALAGALLHGEALRPSYNTSLRGIAPGAFIDPTARLEPGVEVEPTAVVGAGAEIGSGTRIAAGAVIGPQVRIGRDCTISAGASILCALIGNNVIIHPGARIGQDGFGYAPGPKGGMIKIVQVGRVIIQDHVEIGANTTVDRGTMDDTVIGEGTKIDNLVQIGHNVRIGRYCGIVSQVGIAGSARIGDGVMIGGNAGVNGHTTIGDGAQIAAMSGVASDVPAGERYGGIPARPMRDFLREVAEIAMRSSERHKKKGGKDE</sequence>
<accession>C3MBR0</accession>
<proteinExistence type="inferred from homology"/>
<comment type="function">
    <text evidence="1">Catalyzes the N-acylation of UDP-3-O-acylglucosamine using 3-hydroxyacyl-ACP as the acyl donor. Is involved in the biosynthesis of lipid A, a phosphorylated glycolipid that anchors the lipopolysaccharide to the outer membrane of the cell.</text>
</comment>
<comment type="catalytic activity">
    <reaction evidence="1">
        <text>a UDP-3-O-[(3R)-3-hydroxyacyl]-alpha-D-glucosamine + a (3R)-hydroxyacyl-[ACP] = a UDP-2-N,3-O-bis[(3R)-3-hydroxyacyl]-alpha-D-glucosamine + holo-[ACP] + H(+)</text>
        <dbReference type="Rhea" id="RHEA:53836"/>
        <dbReference type="Rhea" id="RHEA-COMP:9685"/>
        <dbReference type="Rhea" id="RHEA-COMP:9945"/>
        <dbReference type="ChEBI" id="CHEBI:15378"/>
        <dbReference type="ChEBI" id="CHEBI:64479"/>
        <dbReference type="ChEBI" id="CHEBI:78827"/>
        <dbReference type="ChEBI" id="CHEBI:137740"/>
        <dbReference type="ChEBI" id="CHEBI:137748"/>
        <dbReference type="EC" id="2.3.1.191"/>
    </reaction>
</comment>
<comment type="pathway">
    <text evidence="1">Bacterial outer membrane biogenesis; LPS lipid A biosynthesis.</text>
</comment>
<comment type="subunit">
    <text evidence="1">Homotrimer.</text>
</comment>
<comment type="similarity">
    <text evidence="1">Belongs to the transferase hexapeptide repeat family. LpxD subfamily.</text>
</comment>
<feature type="chain" id="PRO_1000190897" description="UDP-3-O-acylglucosamine N-acyltransferase">
    <location>
        <begin position="1"/>
        <end position="354"/>
    </location>
</feature>
<feature type="active site" description="Proton acceptor" evidence="1">
    <location>
        <position position="258"/>
    </location>
</feature>
<name>LPXD_SINFN</name>
<evidence type="ECO:0000255" key="1">
    <source>
        <dbReference type="HAMAP-Rule" id="MF_00523"/>
    </source>
</evidence>
<reference key="1">
    <citation type="journal article" date="2009" name="Appl. Environ. Microbiol.">
        <title>Rhizobium sp. strain NGR234 possesses a remarkable number of secretion systems.</title>
        <authorList>
            <person name="Schmeisser C."/>
            <person name="Liesegang H."/>
            <person name="Krysciak D."/>
            <person name="Bakkou N."/>
            <person name="Le Quere A."/>
            <person name="Wollherr A."/>
            <person name="Heinemeyer I."/>
            <person name="Morgenstern B."/>
            <person name="Pommerening-Roeser A."/>
            <person name="Flores M."/>
            <person name="Palacios R."/>
            <person name="Brenner S."/>
            <person name="Gottschalk G."/>
            <person name="Schmitz R.A."/>
            <person name="Broughton W.J."/>
            <person name="Perret X."/>
            <person name="Strittmatter A.W."/>
            <person name="Streit W.R."/>
        </authorList>
    </citation>
    <scope>NUCLEOTIDE SEQUENCE [LARGE SCALE GENOMIC DNA]</scope>
    <source>
        <strain>NBRC 101917 / NGR234</strain>
    </source>
</reference>
<gene>
    <name evidence="1" type="primary">lpxD</name>
    <name type="ordered locus">NGR_c13420</name>
</gene>